<proteinExistence type="inferred from homology"/>
<keyword id="KW-0028">Amino-acid biosynthesis</keyword>
<keyword id="KW-0100">Branched-chain amino acid biosynthesis</keyword>
<keyword id="KW-0963">Cytoplasm</keyword>
<keyword id="KW-0432">Leucine biosynthesis</keyword>
<keyword id="KW-0464">Manganese</keyword>
<keyword id="KW-0479">Metal-binding</keyword>
<keyword id="KW-1185">Reference proteome</keyword>
<keyword id="KW-0808">Transferase</keyword>
<dbReference type="EC" id="2.3.3.13" evidence="1"/>
<dbReference type="EMBL" id="AE004439">
    <property type="protein sequence ID" value="AAK04046.1"/>
    <property type="molecule type" value="Genomic_DNA"/>
</dbReference>
<dbReference type="RefSeq" id="WP_010907426.1">
    <property type="nucleotide sequence ID" value="NC_002663.1"/>
</dbReference>
<dbReference type="SMR" id="Q9CJN5"/>
<dbReference type="STRING" id="272843.PM1962"/>
<dbReference type="EnsemblBacteria" id="AAK04046">
    <property type="protein sequence ID" value="AAK04046"/>
    <property type="gene ID" value="PM1962"/>
</dbReference>
<dbReference type="KEGG" id="pmu:PM1962"/>
<dbReference type="PATRIC" id="fig|272843.6.peg.1987"/>
<dbReference type="HOGENOM" id="CLU_022158_0_1_6"/>
<dbReference type="OrthoDB" id="9803573at2"/>
<dbReference type="UniPathway" id="UPA00048">
    <property type="reaction ID" value="UER00070"/>
</dbReference>
<dbReference type="Proteomes" id="UP000000809">
    <property type="component" value="Chromosome"/>
</dbReference>
<dbReference type="GO" id="GO:0005829">
    <property type="term" value="C:cytosol"/>
    <property type="evidence" value="ECO:0007669"/>
    <property type="project" value="TreeGrafter"/>
</dbReference>
<dbReference type="GO" id="GO:0003852">
    <property type="term" value="F:2-isopropylmalate synthase activity"/>
    <property type="evidence" value="ECO:0007669"/>
    <property type="project" value="UniProtKB-UniRule"/>
</dbReference>
<dbReference type="GO" id="GO:0003985">
    <property type="term" value="F:acetyl-CoA C-acetyltransferase activity"/>
    <property type="evidence" value="ECO:0007669"/>
    <property type="project" value="UniProtKB-UniRule"/>
</dbReference>
<dbReference type="GO" id="GO:0030145">
    <property type="term" value="F:manganese ion binding"/>
    <property type="evidence" value="ECO:0007669"/>
    <property type="project" value="UniProtKB-UniRule"/>
</dbReference>
<dbReference type="GO" id="GO:0009098">
    <property type="term" value="P:L-leucine biosynthetic process"/>
    <property type="evidence" value="ECO:0007669"/>
    <property type="project" value="UniProtKB-UniRule"/>
</dbReference>
<dbReference type="CDD" id="cd07940">
    <property type="entry name" value="DRE_TIM_IPMS"/>
    <property type="match status" value="1"/>
</dbReference>
<dbReference type="FunFam" id="1.10.238.260:FF:000001">
    <property type="entry name" value="2-isopropylmalate synthase"/>
    <property type="match status" value="1"/>
</dbReference>
<dbReference type="FunFam" id="3.20.20.70:FF:000010">
    <property type="entry name" value="2-isopropylmalate synthase"/>
    <property type="match status" value="1"/>
</dbReference>
<dbReference type="FunFam" id="3.30.160.270:FF:000001">
    <property type="entry name" value="2-isopropylmalate synthase"/>
    <property type="match status" value="1"/>
</dbReference>
<dbReference type="Gene3D" id="1.10.238.260">
    <property type="match status" value="1"/>
</dbReference>
<dbReference type="Gene3D" id="3.30.160.270">
    <property type="match status" value="1"/>
</dbReference>
<dbReference type="Gene3D" id="3.20.20.70">
    <property type="entry name" value="Aldolase class I"/>
    <property type="match status" value="1"/>
</dbReference>
<dbReference type="HAMAP" id="MF_01025">
    <property type="entry name" value="LeuA_type1"/>
    <property type="match status" value="1"/>
</dbReference>
<dbReference type="InterPro" id="IPR050073">
    <property type="entry name" value="2-IPM_HCS-like"/>
</dbReference>
<dbReference type="InterPro" id="IPR013709">
    <property type="entry name" value="2-isopropylmalate_synth_dimer"/>
</dbReference>
<dbReference type="InterPro" id="IPR002034">
    <property type="entry name" value="AIPM/Hcit_synth_CS"/>
</dbReference>
<dbReference type="InterPro" id="IPR013785">
    <property type="entry name" value="Aldolase_TIM"/>
</dbReference>
<dbReference type="InterPro" id="IPR054691">
    <property type="entry name" value="LeuA/HCS_post-cat"/>
</dbReference>
<dbReference type="InterPro" id="IPR036230">
    <property type="entry name" value="LeuA_allosteric_dom_sf"/>
</dbReference>
<dbReference type="InterPro" id="IPR005671">
    <property type="entry name" value="LeuA_bact_synth"/>
</dbReference>
<dbReference type="InterPro" id="IPR000891">
    <property type="entry name" value="PYR_CT"/>
</dbReference>
<dbReference type="NCBIfam" id="TIGR00973">
    <property type="entry name" value="leuA_bact"/>
    <property type="match status" value="1"/>
</dbReference>
<dbReference type="NCBIfam" id="NF002084">
    <property type="entry name" value="PRK00915.1-1"/>
    <property type="match status" value="1"/>
</dbReference>
<dbReference type="NCBIfam" id="NF002086">
    <property type="entry name" value="PRK00915.1-3"/>
    <property type="match status" value="1"/>
</dbReference>
<dbReference type="PANTHER" id="PTHR10277:SF9">
    <property type="entry name" value="2-ISOPROPYLMALATE SYNTHASE 1, CHLOROPLASTIC-RELATED"/>
    <property type="match status" value="1"/>
</dbReference>
<dbReference type="PANTHER" id="PTHR10277">
    <property type="entry name" value="HOMOCITRATE SYNTHASE-RELATED"/>
    <property type="match status" value="1"/>
</dbReference>
<dbReference type="Pfam" id="PF22617">
    <property type="entry name" value="HCS_D2"/>
    <property type="match status" value="1"/>
</dbReference>
<dbReference type="Pfam" id="PF00682">
    <property type="entry name" value="HMGL-like"/>
    <property type="match status" value="1"/>
</dbReference>
<dbReference type="Pfam" id="PF08502">
    <property type="entry name" value="LeuA_dimer"/>
    <property type="match status" value="1"/>
</dbReference>
<dbReference type="SMART" id="SM00917">
    <property type="entry name" value="LeuA_dimer"/>
    <property type="match status" value="1"/>
</dbReference>
<dbReference type="SUPFAM" id="SSF110921">
    <property type="entry name" value="2-isopropylmalate synthase LeuA, allosteric (dimerisation) domain"/>
    <property type="match status" value="1"/>
</dbReference>
<dbReference type="SUPFAM" id="SSF51569">
    <property type="entry name" value="Aldolase"/>
    <property type="match status" value="1"/>
</dbReference>
<dbReference type="PROSITE" id="PS00815">
    <property type="entry name" value="AIPM_HOMOCIT_SYNTH_1"/>
    <property type="match status" value="1"/>
</dbReference>
<dbReference type="PROSITE" id="PS00816">
    <property type="entry name" value="AIPM_HOMOCIT_SYNTH_2"/>
    <property type="match status" value="1"/>
</dbReference>
<dbReference type="PROSITE" id="PS50991">
    <property type="entry name" value="PYR_CT"/>
    <property type="match status" value="1"/>
</dbReference>
<accession>Q9CJN5</accession>
<evidence type="ECO:0000255" key="1">
    <source>
        <dbReference type="HAMAP-Rule" id="MF_01025"/>
    </source>
</evidence>
<comment type="function">
    <text evidence="1">Catalyzes the condensation of the acetyl group of acetyl-CoA with 3-methyl-2-oxobutanoate (2-ketoisovalerate) to form 3-carboxy-3-hydroxy-4-methylpentanoate (2-isopropylmalate).</text>
</comment>
<comment type="catalytic activity">
    <reaction evidence="1">
        <text>3-methyl-2-oxobutanoate + acetyl-CoA + H2O = (2S)-2-isopropylmalate + CoA + H(+)</text>
        <dbReference type="Rhea" id="RHEA:21524"/>
        <dbReference type="ChEBI" id="CHEBI:1178"/>
        <dbReference type="ChEBI" id="CHEBI:11851"/>
        <dbReference type="ChEBI" id="CHEBI:15377"/>
        <dbReference type="ChEBI" id="CHEBI:15378"/>
        <dbReference type="ChEBI" id="CHEBI:57287"/>
        <dbReference type="ChEBI" id="CHEBI:57288"/>
        <dbReference type="EC" id="2.3.3.13"/>
    </reaction>
</comment>
<comment type="cofactor">
    <cofactor evidence="1">
        <name>Mn(2+)</name>
        <dbReference type="ChEBI" id="CHEBI:29035"/>
    </cofactor>
</comment>
<comment type="pathway">
    <text evidence="1">Amino-acid biosynthesis; L-leucine biosynthesis; L-leucine from 3-methyl-2-oxobutanoate: step 1/4.</text>
</comment>
<comment type="subunit">
    <text evidence="1">Homodimer.</text>
</comment>
<comment type="subcellular location">
    <subcellularLocation>
        <location evidence="1">Cytoplasm</location>
    </subcellularLocation>
</comment>
<comment type="similarity">
    <text evidence="1">Belongs to the alpha-IPM synthase/homocitrate synthase family. LeuA type 1 subfamily.</text>
</comment>
<sequence>MADNIIIFDTTLRDGEQALKASLTVKEKLQIAFALERLGVDVMEVGFPISSAGDFESVQTIARHIKHSRVCALSRAVDKDIDAAAEALKVAEAFRIHTFIATSALHVEAKLRRTFEDVVDMAINAVKRARNYTDDVEFSCEDAGRTGVDNICRIVEAAIKAGATTVNIPDTVGYCLPYQYGDIIANVMNRVPNIDKAIISVHCHNDLGMATANSLTAVQNGARQIECTINGIGERAGNTALEEVVMAIKTRQDMFNGLDTRINTQEIHRVSQMVSQLCNMPIQPNKAIVGSNAFAHSSGIHQDGMVKHKNTYEIMSPESIGLKKEKLNLTARSGRAAVKNHMSEMGYQESDYDLDKLYEAFLKLADKKGQVFDYDLEALAFIDMQQGDEDRLTLDVITSQCISHLPASAFVQVELDGKKMSQVSNGGNGPVDAVYNAILAITGLEMKMLNYNLTAKGEGAEALGQVDIVVEHEGRRFHGVGLATDIVESSARALIHAINAIYRSQKVADLKLHKIAGV</sequence>
<organism>
    <name type="scientific">Pasteurella multocida (strain Pm70)</name>
    <dbReference type="NCBI Taxonomy" id="272843"/>
    <lineage>
        <taxon>Bacteria</taxon>
        <taxon>Pseudomonadati</taxon>
        <taxon>Pseudomonadota</taxon>
        <taxon>Gammaproteobacteria</taxon>
        <taxon>Pasteurellales</taxon>
        <taxon>Pasteurellaceae</taxon>
        <taxon>Pasteurella</taxon>
    </lineage>
</organism>
<gene>
    <name evidence="1" type="primary">leuA</name>
    <name type="ordered locus">PM1962</name>
</gene>
<reference key="1">
    <citation type="journal article" date="2001" name="Proc. Natl. Acad. Sci. U.S.A.">
        <title>Complete genomic sequence of Pasteurella multocida Pm70.</title>
        <authorList>
            <person name="May B.J."/>
            <person name="Zhang Q."/>
            <person name="Li L.L."/>
            <person name="Paustian M.L."/>
            <person name="Whittam T.S."/>
            <person name="Kapur V."/>
        </authorList>
    </citation>
    <scope>NUCLEOTIDE SEQUENCE [LARGE SCALE GENOMIC DNA]</scope>
    <source>
        <strain>Pm70</strain>
    </source>
</reference>
<protein>
    <recommendedName>
        <fullName evidence="1">2-isopropylmalate synthase</fullName>
        <ecNumber evidence="1">2.3.3.13</ecNumber>
    </recommendedName>
    <alternativeName>
        <fullName evidence="1">Alpha-IPM synthase</fullName>
    </alternativeName>
    <alternativeName>
        <fullName evidence="1">Alpha-isopropylmalate synthase</fullName>
    </alternativeName>
</protein>
<feature type="chain" id="PRO_0000140367" description="2-isopropylmalate synthase">
    <location>
        <begin position="1"/>
        <end position="518"/>
    </location>
</feature>
<feature type="domain" description="Pyruvate carboxyltransferase" evidence="1">
    <location>
        <begin position="5"/>
        <end position="268"/>
    </location>
</feature>
<feature type="region of interest" description="Regulatory domain" evidence="1">
    <location>
        <begin position="393"/>
        <end position="518"/>
    </location>
</feature>
<feature type="binding site" evidence="1">
    <location>
        <position position="14"/>
    </location>
    <ligand>
        <name>Mn(2+)</name>
        <dbReference type="ChEBI" id="CHEBI:29035"/>
    </ligand>
</feature>
<feature type="binding site" evidence="1">
    <location>
        <position position="202"/>
    </location>
    <ligand>
        <name>Mn(2+)</name>
        <dbReference type="ChEBI" id="CHEBI:29035"/>
    </ligand>
</feature>
<feature type="binding site" evidence="1">
    <location>
        <position position="204"/>
    </location>
    <ligand>
        <name>Mn(2+)</name>
        <dbReference type="ChEBI" id="CHEBI:29035"/>
    </ligand>
</feature>
<feature type="binding site" evidence="1">
    <location>
        <position position="238"/>
    </location>
    <ligand>
        <name>Mn(2+)</name>
        <dbReference type="ChEBI" id="CHEBI:29035"/>
    </ligand>
</feature>
<name>LEU1_PASMU</name>